<dbReference type="EC" id="4.2.1.10" evidence="1"/>
<dbReference type="EMBL" id="AL157959">
    <property type="protein sequence ID" value="CAM08793.1"/>
    <property type="status" value="ALT_INIT"/>
    <property type="molecule type" value="Genomic_DNA"/>
</dbReference>
<dbReference type="SMR" id="Q9JTR9"/>
<dbReference type="EnsemblBacteria" id="CAM08793">
    <property type="protein sequence ID" value="CAM08793"/>
    <property type="gene ID" value="NMA1659"/>
</dbReference>
<dbReference type="KEGG" id="nma:NMA1659"/>
<dbReference type="HOGENOM" id="CLU_064444_0_0_4"/>
<dbReference type="UniPathway" id="UPA00053">
    <property type="reaction ID" value="UER00086"/>
</dbReference>
<dbReference type="Proteomes" id="UP000000626">
    <property type="component" value="Chromosome"/>
</dbReference>
<dbReference type="GO" id="GO:0003855">
    <property type="term" value="F:3-dehydroquinate dehydratase activity"/>
    <property type="evidence" value="ECO:0007669"/>
    <property type="project" value="UniProtKB-UniRule"/>
</dbReference>
<dbReference type="GO" id="GO:0046279">
    <property type="term" value="P:3,4-dihydroxybenzoate biosynthetic process"/>
    <property type="evidence" value="ECO:0007669"/>
    <property type="project" value="TreeGrafter"/>
</dbReference>
<dbReference type="GO" id="GO:0008652">
    <property type="term" value="P:amino acid biosynthetic process"/>
    <property type="evidence" value="ECO:0007669"/>
    <property type="project" value="UniProtKB-KW"/>
</dbReference>
<dbReference type="GO" id="GO:0009073">
    <property type="term" value="P:aromatic amino acid family biosynthetic process"/>
    <property type="evidence" value="ECO:0007669"/>
    <property type="project" value="UniProtKB-KW"/>
</dbReference>
<dbReference type="GO" id="GO:0009423">
    <property type="term" value="P:chorismate biosynthetic process"/>
    <property type="evidence" value="ECO:0007669"/>
    <property type="project" value="UniProtKB-UniRule"/>
</dbReference>
<dbReference type="CDD" id="cd00502">
    <property type="entry name" value="DHQase_I"/>
    <property type="match status" value="1"/>
</dbReference>
<dbReference type="FunFam" id="3.20.20.70:FF:000047">
    <property type="entry name" value="3-dehydroquinate dehydratase"/>
    <property type="match status" value="1"/>
</dbReference>
<dbReference type="Gene3D" id="3.20.20.70">
    <property type="entry name" value="Aldolase class I"/>
    <property type="match status" value="1"/>
</dbReference>
<dbReference type="HAMAP" id="MF_00214">
    <property type="entry name" value="AroD"/>
    <property type="match status" value="1"/>
</dbReference>
<dbReference type="InterPro" id="IPR013785">
    <property type="entry name" value="Aldolase_TIM"/>
</dbReference>
<dbReference type="InterPro" id="IPR001381">
    <property type="entry name" value="DHquinase_I"/>
</dbReference>
<dbReference type="InterPro" id="IPR050146">
    <property type="entry name" value="Type-I_3-dehydroquinase"/>
</dbReference>
<dbReference type="NCBIfam" id="TIGR01093">
    <property type="entry name" value="aroD"/>
    <property type="match status" value="1"/>
</dbReference>
<dbReference type="PANTHER" id="PTHR43699">
    <property type="entry name" value="3-DEHYDROQUINATE DEHYDRATASE"/>
    <property type="match status" value="1"/>
</dbReference>
<dbReference type="PANTHER" id="PTHR43699:SF1">
    <property type="entry name" value="3-DEHYDROQUINATE DEHYDRATASE"/>
    <property type="match status" value="1"/>
</dbReference>
<dbReference type="Pfam" id="PF01487">
    <property type="entry name" value="DHquinase_I"/>
    <property type="match status" value="1"/>
</dbReference>
<dbReference type="SUPFAM" id="SSF51569">
    <property type="entry name" value="Aldolase"/>
    <property type="match status" value="1"/>
</dbReference>
<name>AROD_NEIMA</name>
<proteinExistence type="inferred from homology"/>
<feature type="chain" id="PRO_0000138802" description="3-dehydroquinate dehydratase">
    <location>
        <begin position="1"/>
        <end position="254"/>
    </location>
</feature>
<feature type="active site" description="Proton donor/acceptor" evidence="1">
    <location>
        <position position="144"/>
    </location>
</feature>
<feature type="active site" description="Schiff-base intermediate with substrate" evidence="1">
    <location>
        <position position="171"/>
    </location>
</feature>
<feature type="binding site" evidence="1">
    <location>
        <begin position="47"/>
        <end position="49"/>
    </location>
    <ligand>
        <name>3-dehydroquinate</name>
        <dbReference type="ChEBI" id="CHEBI:32364"/>
    </ligand>
</feature>
<feature type="binding site" evidence="1">
    <location>
        <position position="83"/>
    </location>
    <ligand>
        <name>3-dehydroquinate</name>
        <dbReference type="ChEBI" id="CHEBI:32364"/>
    </ligand>
</feature>
<feature type="binding site" evidence="1">
    <location>
        <position position="213"/>
    </location>
    <ligand>
        <name>3-dehydroquinate</name>
        <dbReference type="ChEBI" id="CHEBI:32364"/>
    </ligand>
</feature>
<feature type="binding site" evidence="1">
    <location>
        <position position="232"/>
    </location>
    <ligand>
        <name>3-dehydroquinate</name>
        <dbReference type="ChEBI" id="CHEBI:32364"/>
    </ligand>
</feature>
<feature type="binding site" evidence="1">
    <location>
        <position position="236"/>
    </location>
    <ligand>
        <name>3-dehydroquinate</name>
        <dbReference type="ChEBI" id="CHEBI:32364"/>
    </ligand>
</feature>
<gene>
    <name evidence="1" type="primary">aroD</name>
    <name type="ordered locus">NMA1659</name>
</gene>
<keyword id="KW-0028">Amino-acid biosynthesis</keyword>
<keyword id="KW-0057">Aromatic amino acid biosynthesis</keyword>
<keyword id="KW-0456">Lyase</keyword>
<keyword id="KW-0704">Schiff base</keyword>
<evidence type="ECO:0000255" key="1">
    <source>
        <dbReference type="HAMAP-Rule" id="MF_00214"/>
    </source>
</evidence>
<evidence type="ECO:0000305" key="2"/>
<organism>
    <name type="scientific">Neisseria meningitidis serogroup A / serotype 4A (strain DSM 15465 / Z2491)</name>
    <dbReference type="NCBI Taxonomy" id="122587"/>
    <lineage>
        <taxon>Bacteria</taxon>
        <taxon>Pseudomonadati</taxon>
        <taxon>Pseudomonadota</taxon>
        <taxon>Betaproteobacteria</taxon>
        <taxon>Neisseriales</taxon>
        <taxon>Neisseriaceae</taxon>
        <taxon>Neisseria</taxon>
    </lineage>
</organism>
<comment type="function">
    <text evidence="1">Involved in the third step of the chorismate pathway, which leads to the biosynthesis of aromatic amino acids. Catalyzes the cis-dehydration of 3-dehydroquinate (DHQ) and introduces the first double bond of the aromatic ring to yield 3-dehydroshikimate.</text>
</comment>
<comment type="catalytic activity">
    <reaction evidence="1">
        <text>3-dehydroquinate = 3-dehydroshikimate + H2O</text>
        <dbReference type="Rhea" id="RHEA:21096"/>
        <dbReference type="ChEBI" id="CHEBI:15377"/>
        <dbReference type="ChEBI" id="CHEBI:16630"/>
        <dbReference type="ChEBI" id="CHEBI:32364"/>
        <dbReference type="EC" id="4.2.1.10"/>
    </reaction>
</comment>
<comment type="pathway">
    <text evidence="1">Metabolic intermediate biosynthesis; chorismate biosynthesis; chorismate from D-erythrose 4-phosphate and phosphoenolpyruvate: step 3/7.</text>
</comment>
<comment type="subunit">
    <text evidence="1">Homodimer.</text>
</comment>
<comment type="similarity">
    <text evidence="1">Belongs to the type-I 3-dehydroquinase family.</text>
</comment>
<comment type="sequence caution" evidence="2">
    <conflict type="erroneous initiation">
        <sequence resource="EMBL-CDS" id="CAM08793"/>
    </conflict>
    <text>Extended N-terminus.</text>
</comment>
<protein>
    <recommendedName>
        <fullName evidence="1">3-dehydroquinate dehydratase</fullName>
        <shortName evidence="1">3-dehydroquinase</shortName>
        <ecNumber evidence="1">4.2.1.10</ecNumber>
    </recommendedName>
    <alternativeName>
        <fullName evidence="1">Type I DHQase</fullName>
    </alternativeName>
    <alternativeName>
        <fullName evidence="1">Type I dehydroquinase</fullName>
        <shortName evidence="1">DHQ1</shortName>
    </alternativeName>
</protein>
<sequence length="254" mass="27157">MCSCLVVKNTVIGSGRTKIAVPLVARDAAVLSAVLDQIKNLPFDIVEFRADFLECAGSIGEVLRHTQTVRDALPDKPLLFTFRRHGEGGSFPCSDDYYFELLDALIESRLPDIIDIELFSGETAVRCAVANAQKNGIAALLCNHEFHRTPPQEEIVCRLKQMEDCGADICKIAVMPQSAEDVLTLLSATLKAKELAAKPIVTMSMGQTGAVSRLAGQVFGSSITFGSGTQNSAPGQIGVSALRATLDCLENGAD</sequence>
<reference key="1">
    <citation type="journal article" date="2000" name="Nature">
        <title>Complete DNA sequence of a serogroup A strain of Neisseria meningitidis Z2491.</title>
        <authorList>
            <person name="Parkhill J."/>
            <person name="Achtman M."/>
            <person name="James K.D."/>
            <person name="Bentley S.D."/>
            <person name="Churcher C.M."/>
            <person name="Klee S.R."/>
            <person name="Morelli G."/>
            <person name="Basham D."/>
            <person name="Brown D."/>
            <person name="Chillingworth T."/>
            <person name="Davies R.M."/>
            <person name="Davis P."/>
            <person name="Devlin K."/>
            <person name="Feltwell T."/>
            <person name="Hamlin N."/>
            <person name="Holroyd S."/>
            <person name="Jagels K."/>
            <person name="Leather S."/>
            <person name="Moule S."/>
            <person name="Mungall K.L."/>
            <person name="Quail M.A."/>
            <person name="Rajandream M.A."/>
            <person name="Rutherford K.M."/>
            <person name="Simmonds M."/>
            <person name="Skelton J."/>
            <person name="Whitehead S."/>
            <person name="Spratt B.G."/>
            <person name="Barrell B.G."/>
        </authorList>
    </citation>
    <scope>NUCLEOTIDE SEQUENCE [LARGE SCALE GENOMIC DNA]</scope>
    <source>
        <strain>DSM 15465 / Z2491</strain>
    </source>
</reference>
<accession>Q9JTR9</accession>
<accession>A1ISN4</accession>